<dbReference type="EMBL" id="CP000560">
    <property type="protein sequence ID" value="ABS73943.1"/>
    <property type="molecule type" value="Genomic_DNA"/>
</dbReference>
<dbReference type="RefSeq" id="WP_003154299.1">
    <property type="nucleotide sequence ID" value="NC_009725.2"/>
</dbReference>
<dbReference type="SMR" id="A7Z4L7"/>
<dbReference type="GeneID" id="93080713"/>
<dbReference type="KEGG" id="bay:RBAM_015800"/>
<dbReference type="HOGENOM" id="CLU_129218_1_0_9"/>
<dbReference type="Proteomes" id="UP000001120">
    <property type="component" value="Chromosome"/>
</dbReference>
<dbReference type="Gene3D" id="1.10.10.10">
    <property type="entry name" value="Winged helix-like DNA-binding domain superfamily/Winged helix DNA-binding domain"/>
    <property type="match status" value="1"/>
</dbReference>
<dbReference type="HAMAP" id="MF_00245">
    <property type="entry name" value="UPF0122"/>
    <property type="match status" value="1"/>
</dbReference>
<dbReference type="InterPro" id="IPR013324">
    <property type="entry name" value="RNA_pol_sigma_r3/r4-like"/>
</dbReference>
<dbReference type="InterPro" id="IPR007394">
    <property type="entry name" value="UPF0122"/>
</dbReference>
<dbReference type="InterPro" id="IPR054831">
    <property type="entry name" value="UPF0122_fam_protein"/>
</dbReference>
<dbReference type="InterPro" id="IPR036388">
    <property type="entry name" value="WH-like_DNA-bd_sf"/>
</dbReference>
<dbReference type="NCBIfam" id="NF001068">
    <property type="entry name" value="PRK00118.1-4"/>
    <property type="match status" value="1"/>
</dbReference>
<dbReference type="NCBIfam" id="NF001070">
    <property type="entry name" value="PRK00118.1-6"/>
    <property type="match status" value="1"/>
</dbReference>
<dbReference type="NCBIfam" id="NF045758">
    <property type="entry name" value="YlxM"/>
    <property type="match status" value="1"/>
</dbReference>
<dbReference type="PANTHER" id="PTHR40083">
    <property type="entry name" value="UPF0122 PROTEIN CBO2450/CLC_2298"/>
    <property type="match status" value="1"/>
</dbReference>
<dbReference type="PANTHER" id="PTHR40083:SF1">
    <property type="entry name" value="UPF0122 PROTEIN YLXM"/>
    <property type="match status" value="1"/>
</dbReference>
<dbReference type="Pfam" id="PF04297">
    <property type="entry name" value="UPF0122"/>
    <property type="match status" value="1"/>
</dbReference>
<dbReference type="SUPFAM" id="SSF88659">
    <property type="entry name" value="Sigma3 and sigma4 domains of RNA polymerase sigma factors"/>
    <property type="match status" value="1"/>
</dbReference>
<gene>
    <name type="ordered locus">RBAM_015800</name>
</gene>
<proteinExistence type="inferred from homology"/>
<accession>A7Z4L7</accession>
<name>Y1580_BACVZ</name>
<evidence type="ECO:0000255" key="1">
    <source>
        <dbReference type="HAMAP-Rule" id="MF_00245"/>
    </source>
</evidence>
<sequence length="110" mass="13215">MSLEKTTRMNYLFDFYQSLLTSKQKSYMSLYYLDDFSLGEIAEEYDVSRQAVYDNIKRTEAMLEQYEEKLLLFKKFQERKEMFTKLKELASGLQEEEKMTALIEALEKLD</sequence>
<protein>
    <recommendedName>
        <fullName evidence="1">UPF0122 protein RBAM_015800</fullName>
    </recommendedName>
</protein>
<reference key="1">
    <citation type="journal article" date="2007" name="Nat. Biotechnol.">
        <title>Comparative analysis of the complete genome sequence of the plant growth-promoting bacterium Bacillus amyloliquefaciens FZB42.</title>
        <authorList>
            <person name="Chen X.H."/>
            <person name="Koumoutsi A."/>
            <person name="Scholz R."/>
            <person name="Eisenreich A."/>
            <person name="Schneider K."/>
            <person name="Heinemeyer I."/>
            <person name="Morgenstern B."/>
            <person name="Voss B."/>
            <person name="Hess W.R."/>
            <person name="Reva O."/>
            <person name="Junge H."/>
            <person name="Voigt B."/>
            <person name="Jungblut P.R."/>
            <person name="Vater J."/>
            <person name="Suessmuth R."/>
            <person name="Liesegang H."/>
            <person name="Strittmatter A."/>
            <person name="Gottschalk G."/>
            <person name="Borriss R."/>
        </authorList>
    </citation>
    <scope>NUCLEOTIDE SEQUENCE [LARGE SCALE GENOMIC DNA]</scope>
    <source>
        <strain>DSM 23117 / BGSC 10A6 / LMG 26770 / FZB42</strain>
    </source>
</reference>
<comment type="function">
    <text evidence="1">Might take part in the signal recognition particle (SRP) pathway. This is inferred from the conservation of its genetic proximity to ftsY/ffh. May be a regulatory protein.</text>
</comment>
<comment type="similarity">
    <text evidence="1">Belongs to the UPF0122 family.</text>
</comment>
<organism>
    <name type="scientific">Bacillus velezensis (strain DSM 23117 / BGSC 10A6 / LMG 26770 / FZB42)</name>
    <name type="common">Bacillus amyloliquefaciens subsp. plantarum</name>
    <dbReference type="NCBI Taxonomy" id="326423"/>
    <lineage>
        <taxon>Bacteria</taxon>
        <taxon>Bacillati</taxon>
        <taxon>Bacillota</taxon>
        <taxon>Bacilli</taxon>
        <taxon>Bacillales</taxon>
        <taxon>Bacillaceae</taxon>
        <taxon>Bacillus</taxon>
        <taxon>Bacillus amyloliquefaciens group</taxon>
    </lineage>
</organism>
<feature type="chain" id="PRO_1000078397" description="UPF0122 protein RBAM_015800">
    <location>
        <begin position="1"/>
        <end position="110"/>
    </location>
</feature>